<proteinExistence type="inferred from homology"/>
<accession>Q9MS65</accession>
<protein>
    <recommendedName>
        <fullName evidence="1">Photosystem I reaction center subunit XII</fullName>
    </recommendedName>
    <alternativeName>
        <fullName evidence="1">PSI-M</fullName>
    </alternativeName>
</protein>
<name>PSAM_EUGMU</name>
<reference key="1">
    <citation type="journal article" date="2001" name="Mol. Gen. Genet.">
        <title>Comparison of psbK operon organization and group III intron content in chloroplast genomes of 12 Euglenoid species.</title>
        <authorList>
            <person name="Doetsch N.A."/>
            <person name="Thompson M.D."/>
            <person name="Favreau M.R."/>
            <person name="Hallick R.B."/>
        </authorList>
    </citation>
    <scope>NUCLEOTIDE SEQUENCE [GENOMIC DNA]</scope>
</reference>
<reference key="2">
    <citation type="submission" date="2005-07" db="EMBL/GenBank/DDBJ databases">
        <title>Evolution of genetic elements in Euglena species.</title>
        <authorList>
            <person name="Sheveleva E.V."/>
            <person name="De Armond R.L."/>
            <person name="Perkumas K.M."/>
            <person name="Giordani N.V."/>
            <person name="Hallick R.B."/>
        </authorList>
    </citation>
    <scope>NUCLEOTIDE SEQUENCE [GENOMIC DNA]</scope>
</reference>
<organism>
    <name type="scientific">Euglena mutabilis</name>
    <dbReference type="NCBI Taxonomy" id="38275"/>
    <lineage>
        <taxon>Eukaryota</taxon>
        <taxon>Discoba</taxon>
        <taxon>Euglenozoa</taxon>
        <taxon>Euglenida</taxon>
        <taxon>Spirocuta</taxon>
        <taxon>Euglenophyceae</taxon>
        <taxon>Euglenales</taxon>
        <taxon>Euglenaceae</taxon>
        <taxon>Euglena</taxon>
    </lineage>
</organism>
<gene>
    <name evidence="1" type="primary">psaM</name>
</gene>
<keyword id="KW-0150">Chloroplast</keyword>
<keyword id="KW-0472">Membrane</keyword>
<keyword id="KW-0602">Photosynthesis</keyword>
<keyword id="KW-0603">Photosystem I</keyword>
<keyword id="KW-0934">Plastid</keyword>
<keyword id="KW-0793">Thylakoid</keyword>
<keyword id="KW-0812">Transmembrane</keyword>
<keyword id="KW-1133">Transmembrane helix</keyword>
<feature type="chain" id="PRO_0000277403" description="Photosystem I reaction center subunit XII">
    <location>
        <begin position="1"/>
        <end position="31"/>
    </location>
</feature>
<feature type="transmembrane region" description="Helical" evidence="1">
    <location>
        <begin position="7"/>
        <end position="26"/>
    </location>
</feature>
<sequence>MGITSTQIYIALLTALIPAFFALKLGRELNK</sequence>
<geneLocation type="chloroplast"/>
<dbReference type="EMBL" id="AF241280">
    <property type="protein sequence ID" value="AAF82450.1"/>
    <property type="molecule type" value="Genomic_DNA"/>
</dbReference>
<dbReference type="EMBL" id="DQ128156">
    <property type="protein sequence ID" value="ABB02351.1"/>
    <property type="molecule type" value="Genomic_DNA"/>
</dbReference>
<dbReference type="SMR" id="Q9MS65"/>
<dbReference type="GO" id="GO:0009535">
    <property type="term" value="C:chloroplast thylakoid membrane"/>
    <property type="evidence" value="ECO:0007669"/>
    <property type="project" value="UniProtKB-SubCell"/>
</dbReference>
<dbReference type="GO" id="GO:0009522">
    <property type="term" value="C:photosystem I"/>
    <property type="evidence" value="ECO:0007669"/>
    <property type="project" value="UniProtKB-KW"/>
</dbReference>
<dbReference type="GO" id="GO:0015979">
    <property type="term" value="P:photosynthesis"/>
    <property type="evidence" value="ECO:0007669"/>
    <property type="project" value="UniProtKB-UniRule"/>
</dbReference>
<dbReference type="HAMAP" id="MF_00828">
    <property type="entry name" value="PSI_PsaM"/>
    <property type="match status" value="1"/>
</dbReference>
<dbReference type="InterPro" id="IPR010010">
    <property type="entry name" value="PSI_PsaM"/>
</dbReference>
<dbReference type="InterPro" id="IPR037279">
    <property type="entry name" value="PSI_PsaM_sf"/>
</dbReference>
<dbReference type="NCBIfam" id="TIGR03053">
    <property type="entry name" value="PS_I_psaM"/>
    <property type="match status" value="1"/>
</dbReference>
<dbReference type="Pfam" id="PF07465">
    <property type="entry name" value="PsaM"/>
    <property type="match status" value="1"/>
</dbReference>
<dbReference type="SUPFAM" id="SSF81548">
    <property type="entry name" value="Subunit XII of photosystem I reaction centre, PsaM"/>
    <property type="match status" value="1"/>
</dbReference>
<comment type="subcellular location">
    <subcellularLocation>
        <location evidence="1">Plastid</location>
        <location evidence="1">Chloroplast thylakoid membrane</location>
        <topology evidence="1">Single-pass membrane protein</topology>
    </subcellularLocation>
</comment>
<comment type="similarity">
    <text evidence="1">Belongs to the PsaM family.</text>
</comment>
<evidence type="ECO:0000255" key="1">
    <source>
        <dbReference type="HAMAP-Rule" id="MF_00828"/>
    </source>
</evidence>